<sequence>MEAFSQLVQQAAQAFEKARTPAELEDAKAAFLGKSGELTARMKQLASLPVDEKKARGAEINAAKQQVEAALTARRQAMADAELAQQLRAESLDVTLPGRRRGSGGLHPITRAMERIEAIFGSMGFEVADGPEIETDWFNFTALNTPADHPARSMHDTFYVEGGQVLRTHTSPMQIRHAVRHVKAHRAALDAGLPMPEIRVIAPGRTYRVDSDATHSPMFHQVEGLWVGQNISFKDLKSVYVSFIRAFFETSDLQIRFRPSYFPFTEPSAEIDMMFGSGPLKGRWLEVSGSGQVHPQVIRNMGLDPERYIGFAFGSGIDRLAMLRYGVSDLRLFFDGDLRFLSQFK</sequence>
<dbReference type="EC" id="6.1.1.20" evidence="1"/>
<dbReference type="EMBL" id="CP000555">
    <property type="protein sequence ID" value="ABM94842.1"/>
    <property type="molecule type" value="Genomic_DNA"/>
</dbReference>
<dbReference type="RefSeq" id="WP_011829479.1">
    <property type="nucleotide sequence ID" value="NC_008825.1"/>
</dbReference>
<dbReference type="SMR" id="A2SH03"/>
<dbReference type="STRING" id="420662.Mpe_A1884"/>
<dbReference type="KEGG" id="mpt:Mpe_A1884"/>
<dbReference type="eggNOG" id="COG0016">
    <property type="taxonomic scope" value="Bacteria"/>
</dbReference>
<dbReference type="HOGENOM" id="CLU_025086_0_1_4"/>
<dbReference type="Proteomes" id="UP000000366">
    <property type="component" value="Chromosome"/>
</dbReference>
<dbReference type="GO" id="GO:0005737">
    <property type="term" value="C:cytoplasm"/>
    <property type="evidence" value="ECO:0007669"/>
    <property type="project" value="UniProtKB-SubCell"/>
</dbReference>
<dbReference type="GO" id="GO:0005524">
    <property type="term" value="F:ATP binding"/>
    <property type="evidence" value="ECO:0007669"/>
    <property type="project" value="UniProtKB-UniRule"/>
</dbReference>
<dbReference type="GO" id="GO:0000287">
    <property type="term" value="F:magnesium ion binding"/>
    <property type="evidence" value="ECO:0007669"/>
    <property type="project" value="UniProtKB-UniRule"/>
</dbReference>
<dbReference type="GO" id="GO:0004826">
    <property type="term" value="F:phenylalanine-tRNA ligase activity"/>
    <property type="evidence" value="ECO:0007669"/>
    <property type="project" value="UniProtKB-UniRule"/>
</dbReference>
<dbReference type="GO" id="GO:0000049">
    <property type="term" value="F:tRNA binding"/>
    <property type="evidence" value="ECO:0007669"/>
    <property type="project" value="InterPro"/>
</dbReference>
<dbReference type="GO" id="GO:0006432">
    <property type="term" value="P:phenylalanyl-tRNA aminoacylation"/>
    <property type="evidence" value="ECO:0007669"/>
    <property type="project" value="UniProtKB-UniRule"/>
</dbReference>
<dbReference type="CDD" id="cd00496">
    <property type="entry name" value="PheRS_alpha_core"/>
    <property type="match status" value="1"/>
</dbReference>
<dbReference type="Gene3D" id="3.30.930.10">
    <property type="entry name" value="Bira Bifunctional Protein, Domain 2"/>
    <property type="match status" value="1"/>
</dbReference>
<dbReference type="HAMAP" id="MF_00281">
    <property type="entry name" value="Phe_tRNA_synth_alpha1"/>
    <property type="match status" value="1"/>
</dbReference>
<dbReference type="InterPro" id="IPR006195">
    <property type="entry name" value="aa-tRNA-synth_II"/>
</dbReference>
<dbReference type="InterPro" id="IPR045864">
    <property type="entry name" value="aa-tRNA-synth_II/BPL/LPL"/>
</dbReference>
<dbReference type="InterPro" id="IPR004529">
    <property type="entry name" value="Phe-tRNA-synth_IIc_asu"/>
</dbReference>
<dbReference type="InterPro" id="IPR004188">
    <property type="entry name" value="Phe-tRNA_ligase_II_N"/>
</dbReference>
<dbReference type="InterPro" id="IPR022911">
    <property type="entry name" value="Phe_tRNA_ligase_alpha1_bac"/>
</dbReference>
<dbReference type="InterPro" id="IPR002319">
    <property type="entry name" value="Phenylalanyl-tRNA_Synthase"/>
</dbReference>
<dbReference type="InterPro" id="IPR010978">
    <property type="entry name" value="tRNA-bd_arm"/>
</dbReference>
<dbReference type="NCBIfam" id="TIGR00468">
    <property type="entry name" value="pheS"/>
    <property type="match status" value="1"/>
</dbReference>
<dbReference type="PANTHER" id="PTHR11538:SF41">
    <property type="entry name" value="PHENYLALANINE--TRNA LIGASE, MITOCHONDRIAL"/>
    <property type="match status" value="1"/>
</dbReference>
<dbReference type="PANTHER" id="PTHR11538">
    <property type="entry name" value="PHENYLALANYL-TRNA SYNTHETASE"/>
    <property type="match status" value="1"/>
</dbReference>
<dbReference type="Pfam" id="PF02912">
    <property type="entry name" value="Phe_tRNA-synt_N"/>
    <property type="match status" value="1"/>
</dbReference>
<dbReference type="Pfam" id="PF01409">
    <property type="entry name" value="tRNA-synt_2d"/>
    <property type="match status" value="1"/>
</dbReference>
<dbReference type="SUPFAM" id="SSF55681">
    <property type="entry name" value="Class II aaRS and biotin synthetases"/>
    <property type="match status" value="1"/>
</dbReference>
<dbReference type="SUPFAM" id="SSF46589">
    <property type="entry name" value="tRNA-binding arm"/>
    <property type="match status" value="1"/>
</dbReference>
<dbReference type="PROSITE" id="PS50862">
    <property type="entry name" value="AA_TRNA_LIGASE_II"/>
    <property type="match status" value="1"/>
</dbReference>
<organism>
    <name type="scientific">Methylibium petroleiphilum (strain ATCC BAA-1232 / LMG 22953 / PM1)</name>
    <dbReference type="NCBI Taxonomy" id="420662"/>
    <lineage>
        <taxon>Bacteria</taxon>
        <taxon>Pseudomonadati</taxon>
        <taxon>Pseudomonadota</taxon>
        <taxon>Betaproteobacteria</taxon>
        <taxon>Burkholderiales</taxon>
        <taxon>Sphaerotilaceae</taxon>
        <taxon>Methylibium</taxon>
    </lineage>
</organism>
<accession>A2SH03</accession>
<gene>
    <name evidence="1" type="primary">pheS</name>
    <name type="ordered locus">Mpe_A1884</name>
</gene>
<reference key="1">
    <citation type="journal article" date="2007" name="J. Bacteriol.">
        <title>Whole-genome analysis of the methyl tert-butyl ether-degrading beta-proteobacterium Methylibium petroleiphilum PM1.</title>
        <authorList>
            <person name="Kane S.R."/>
            <person name="Chakicherla A.Y."/>
            <person name="Chain P.S.G."/>
            <person name="Schmidt R."/>
            <person name="Shin M.W."/>
            <person name="Legler T.C."/>
            <person name="Scow K.M."/>
            <person name="Larimer F.W."/>
            <person name="Lucas S.M."/>
            <person name="Richardson P.M."/>
            <person name="Hristova K.R."/>
        </authorList>
    </citation>
    <scope>NUCLEOTIDE SEQUENCE [LARGE SCALE GENOMIC DNA]</scope>
    <source>
        <strain>ATCC BAA-1232 / LMG 22953 / PM1</strain>
    </source>
</reference>
<feature type="chain" id="PRO_1000059243" description="Phenylalanine--tRNA ligase alpha subunit">
    <location>
        <begin position="1"/>
        <end position="345"/>
    </location>
</feature>
<feature type="binding site" evidence="1">
    <location>
        <position position="266"/>
    </location>
    <ligand>
        <name>Mg(2+)</name>
        <dbReference type="ChEBI" id="CHEBI:18420"/>
        <note>shared with beta subunit</note>
    </ligand>
</feature>
<evidence type="ECO:0000255" key="1">
    <source>
        <dbReference type="HAMAP-Rule" id="MF_00281"/>
    </source>
</evidence>
<proteinExistence type="inferred from homology"/>
<protein>
    <recommendedName>
        <fullName evidence="1">Phenylalanine--tRNA ligase alpha subunit</fullName>
        <ecNumber evidence="1">6.1.1.20</ecNumber>
    </recommendedName>
    <alternativeName>
        <fullName evidence="1">Phenylalanyl-tRNA synthetase alpha subunit</fullName>
        <shortName evidence="1">PheRS</shortName>
    </alternativeName>
</protein>
<comment type="catalytic activity">
    <reaction evidence="1">
        <text>tRNA(Phe) + L-phenylalanine + ATP = L-phenylalanyl-tRNA(Phe) + AMP + diphosphate + H(+)</text>
        <dbReference type="Rhea" id="RHEA:19413"/>
        <dbReference type="Rhea" id="RHEA-COMP:9668"/>
        <dbReference type="Rhea" id="RHEA-COMP:9699"/>
        <dbReference type="ChEBI" id="CHEBI:15378"/>
        <dbReference type="ChEBI" id="CHEBI:30616"/>
        <dbReference type="ChEBI" id="CHEBI:33019"/>
        <dbReference type="ChEBI" id="CHEBI:58095"/>
        <dbReference type="ChEBI" id="CHEBI:78442"/>
        <dbReference type="ChEBI" id="CHEBI:78531"/>
        <dbReference type="ChEBI" id="CHEBI:456215"/>
        <dbReference type="EC" id="6.1.1.20"/>
    </reaction>
</comment>
<comment type="cofactor">
    <cofactor evidence="1">
        <name>Mg(2+)</name>
        <dbReference type="ChEBI" id="CHEBI:18420"/>
    </cofactor>
    <text evidence="1">Binds 2 magnesium ions per tetramer.</text>
</comment>
<comment type="subunit">
    <text evidence="1">Tetramer of two alpha and two beta subunits.</text>
</comment>
<comment type="subcellular location">
    <subcellularLocation>
        <location evidence="1">Cytoplasm</location>
    </subcellularLocation>
</comment>
<comment type="similarity">
    <text evidence="1">Belongs to the class-II aminoacyl-tRNA synthetase family. Phe-tRNA synthetase alpha subunit type 1 subfamily.</text>
</comment>
<keyword id="KW-0030">Aminoacyl-tRNA synthetase</keyword>
<keyword id="KW-0067">ATP-binding</keyword>
<keyword id="KW-0963">Cytoplasm</keyword>
<keyword id="KW-0436">Ligase</keyword>
<keyword id="KW-0460">Magnesium</keyword>
<keyword id="KW-0479">Metal-binding</keyword>
<keyword id="KW-0547">Nucleotide-binding</keyword>
<keyword id="KW-0648">Protein biosynthesis</keyword>
<keyword id="KW-1185">Reference proteome</keyword>
<name>SYFA_METPP</name>